<proteinExistence type="inferred from homology"/>
<sequence>MVNVDTKLLVIFVELLSKRNATYVAEKMHMTAPAVSHSLGRLREIFDDPLFIRVPHGLTPTPKALELGPKVREMLDLWAAINEGDIATFDPLEAAGTFNISFAGTLGDALFDRFLLRVKRLAPGLQVRLTESSSWEADVAAMRSNELDLAFSPFPTRHPEIVEEVVTSFNMWVCARKDHPVLKDHCSLDQYLECEHIFIAQGNPGTRAAPSLIPLDYALQQRGLKRHSTMTVHAWRTQAEVAAQTDMIFTVNSLMKDLVCETYNLNAFPLPSELETVLGLNMLWHRSRNTHPMLVWARNLFKQVVAEYTGKASIAPMHPPMLTDDSGKSGKTGKGDAEKEDESRLSV</sequence>
<name>PHCA_RALN1</name>
<gene>
    <name type="primary">phcA</name>
    <name type="ordered locus">RSc2748</name>
    <name type="ORF">RS00106</name>
</gene>
<organism>
    <name type="scientific">Ralstonia nicotianae (strain ATCC BAA-1114 / GMI1000)</name>
    <name type="common">Ralstonia solanacearum</name>
    <dbReference type="NCBI Taxonomy" id="267608"/>
    <lineage>
        <taxon>Bacteria</taxon>
        <taxon>Pseudomonadati</taxon>
        <taxon>Pseudomonadota</taxon>
        <taxon>Betaproteobacteria</taxon>
        <taxon>Burkholderiales</taxon>
        <taxon>Burkholderiaceae</taxon>
        <taxon>Ralstonia</taxon>
        <taxon>Ralstonia solanacearum species complex</taxon>
    </lineage>
</organism>
<evidence type="ECO:0000255" key="1">
    <source>
        <dbReference type="PROSITE-ProRule" id="PRU00253"/>
    </source>
</evidence>
<evidence type="ECO:0000256" key="2">
    <source>
        <dbReference type="SAM" id="MobiDB-lite"/>
    </source>
</evidence>
<evidence type="ECO:0000305" key="3"/>
<keyword id="KW-0238">DNA-binding</keyword>
<keyword id="KW-1185">Reference proteome</keyword>
<keyword id="KW-0804">Transcription</keyword>
<keyword id="KW-0805">Transcription regulation</keyword>
<keyword id="KW-0843">Virulence</keyword>
<dbReference type="EMBL" id="L19269">
    <property type="protein sequence ID" value="AAC36989.1"/>
    <property type="molecule type" value="Unassigned_DNA"/>
</dbReference>
<dbReference type="EMBL" id="AF184046">
    <property type="protein sequence ID" value="AAD56543.1"/>
    <property type="molecule type" value="Genomic_DNA"/>
</dbReference>
<dbReference type="EMBL" id="AF239238">
    <property type="protein sequence ID" value="AAK15051.1"/>
    <property type="molecule type" value="Genomic_DNA"/>
</dbReference>
<dbReference type="EMBL" id="AL646052">
    <property type="protein sequence ID" value="CAD16455.1"/>
    <property type="molecule type" value="Genomic_DNA"/>
</dbReference>
<dbReference type="PIR" id="A48655">
    <property type="entry name" value="A48655"/>
</dbReference>
<dbReference type="RefSeq" id="WP_011002655.1">
    <property type="nucleotide sequence ID" value="NC_003295.1"/>
</dbReference>
<dbReference type="SMR" id="P52698"/>
<dbReference type="STRING" id="267608.RSc2748"/>
<dbReference type="EnsemblBacteria" id="CAD16455">
    <property type="protein sequence ID" value="CAD16455"/>
    <property type="gene ID" value="RSc2748"/>
</dbReference>
<dbReference type="KEGG" id="rso:RSc2748"/>
<dbReference type="PATRIC" id="fig|267608.8.peg.2795"/>
<dbReference type="eggNOG" id="COG0583">
    <property type="taxonomic scope" value="Bacteria"/>
</dbReference>
<dbReference type="HOGENOM" id="CLU_039613_39_0_4"/>
<dbReference type="PHI-base" id="PHI:123503"/>
<dbReference type="PHI-base" id="PHI:7611"/>
<dbReference type="Proteomes" id="UP000001436">
    <property type="component" value="Chromosome"/>
</dbReference>
<dbReference type="GO" id="GO:0032993">
    <property type="term" value="C:protein-DNA complex"/>
    <property type="evidence" value="ECO:0000315"/>
    <property type="project" value="CollecTF"/>
</dbReference>
<dbReference type="GO" id="GO:0001216">
    <property type="term" value="F:DNA-binding transcription activator activity"/>
    <property type="evidence" value="ECO:0000315"/>
    <property type="project" value="CollecTF"/>
</dbReference>
<dbReference type="GO" id="GO:0000976">
    <property type="term" value="F:transcription cis-regulatory region binding"/>
    <property type="evidence" value="ECO:0000315"/>
    <property type="project" value="CollecTF"/>
</dbReference>
<dbReference type="CDD" id="cd08466">
    <property type="entry name" value="PBP2_LeuO"/>
    <property type="match status" value="1"/>
</dbReference>
<dbReference type="Gene3D" id="3.40.190.10">
    <property type="entry name" value="Periplasmic binding protein-like II"/>
    <property type="match status" value="2"/>
</dbReference>
<dbReference type="Gene3D" id="1.10.10.10">
    <property type="entry name" value="Winged helix-like DNA-binding domain superfamily/Winged helix DNA-binding domain"/>
    <property type="match status" value="1"/>
</dbReference>
<dbReference type="InterPro" id="IPR050389">
    <property type="entry name" value="LysR-type_TF"/>
</dbReference>
<dbReference type="InterPro" id="IPR005119">
    <property type="entry name" value="LysR_subst-bd"/>
</dbReference>
<dbReference type="InterPro" id="IPR000847">
    <property type="entry name" value="Tscrpt_reg_HTH_LysR"/>
</dbReference>
<dbReference type="InterPro" id="IPR036388">
    <property type="entry name" value="WH-like_DNA-bd_sf"/>
</dbReference>
<dbReference type="InterPro" id="IPR036390">
    <property type="entry name" value="WH_DNA-bd_sf"/>
</dbReference>
<dbReference type="PANTHER" id="PTHR30118">
    <property type="entry name" value="HTH-TYPE TRANSCRIPTIONAL REGULATOR LEUO-RELATED"/>
    <property type="match status" value="1"/>
</dbReference>
<dbReference type="PANTHER" id="PTHR30118:SF15">
    <property type="entry name" value="TRANSCRIPTIONAL REGULATORY PROTEIN"/>
    <property type="match status" value="1"/>
</dbReference>
<dbReference type="Pfam" id="PF00126">
    <property type="entry name" value="HTH_1"/>
    <property type="match status" value="1"/>
</dbReference>
<dbReference type="Pfam" id="PF03466">
    <property type="entry name" value="LysR_substrate"/>
    <property type="match status" value="1"/>
</dbReference>
<dbReference type="SUPFAM" id="SSF53850">
    <property type="entry name" value="Periplasmic binding protein-like II"/>
    <property type="match status" value="1"/>
</dbReference>
<dbReference type="SUPFAM" id="SSF46785">
    <property type="entry name" value="Winged helix' DNA-binding domain"/>
    <property type="match status" value="1"/>
</dbReference>
<dbReference type="PROSITE" id="PS50931">
    <property type="entry name" value="HTH_LYSR"/>
    <property type="match status" value="1"/>
</dbReference>
<feature type="chain" id="PRO_0000105744" description="HTH-type transcriptional regulator PhcA">
    <location>
        <begin position="1"/>
        <end position="347"/>
    </location>
</feature>
<feature type="domain" description="HTH lysR-type" evidence="1">
    <location>
        <begin position="1"/>
        <end position="61"/>
    </location>
</feature>
<feature type="DNA-binding region" description="H-T-H motif" evidence="1">
    <location>
        <begin position="21"/>
        <end position="40"/>
    </location>
</feature>
<feature type="region of interest" description="Disordered" evidence="2">
    <location>
        <begin position="316"/>
        <end position="347"/>
    </location>
</feature>
<feature type="compositionally biased region" description="Basic and acidic residues" evidence="2">
    <location>
        <begin position="325"/>
        <end position="347"/>
    </location>
</feature>
<feature type="sequence variant" description="In strain: AW1 and ACH0158.">
    <original>L</original>
    <variation>A</variation>
    <location>
        <position position="92"/>
    </location>
</feature>
<feature type="sequence variant" description="In strain: AW1 and ACH0158.">
    <original>I</original>
    <variation>V</variation>
    <location>
        <position position="100"/>
    </location>
</feature>
<feature type="sequence variant" description="In strain: ACH0158.">
    <original>H</original>
    <variation>G</variation>
    <location>
        <position position="185"/>
    </location>
</feature>
<feature type="sequence variant" description="In strain: AW1.">
    <original>H</original>
    <variation>R</variation>
    <location>
        <position position="185"/>
    </location>
</feature>
<feature type="sequence variant" description="In strain: AW1 and ACH0158.">
    <original>T</original>
    <variation>S</variation>
    <location>
        <position position="206"/>
    </location>
</feature>
<feature type="sequence variant" description="In strain: AW1 and ACH0158.">
    <original>M</original>
    <variation>L</variation>
    <location>
        <position position="247"/>
    </location>
</feature>
<feature type="sequence variant" description="In strain: AW1 and ACH0158.">
    <original>T</original>
    <variation>A</variation>
    <location>
        <position position="262"/>
    </location>
</feature>
<feature type="sequence variant" description="In strain: ACH0158.">
    <original>N</original>
    <variation>S</variation>
    <location>
        <position position="264"/>
    </location>
</feature>
<feature type="sequence variant" description="In strain: AW1 and ACH0158.">
    <original>I</original>
    <variation>N</variation>
    <location>
        <position position="314"/>
    </location>
</feature>
<feature type="sequence variant" description="In strain: AW1 and ACH0158.">
    <original>S</original>
    <variation>A</variation>
    <location>
        <position position="329"/>
    </location>
</feature>
<feature type="sequence variant" description="In strain: AW1 and ACH0158.">
    <original>V</original>
    <variation>A</variation>
    <location>
        <position position="347"/>
    </location>
</feature>
<accession>P52698</accession>
<accession>Q9AIT9</accession>
<accession>Q9RBU2</accession>
<protein>
    <recommendedName>
        <fullName>HTH-type transcriptional regulator PhcA</fullName>
    </recommendedName>
    <alternativeName>
        <fullName>Virulence genes transcriptional regulator PhcA</fullName>
    </alternativeName>
</protein>
<comment type="function">
    <text>Regulates the transcription of one or more of the genes involved in virulence.</text>
</comment>
<comment type="similarity">
    <text evidence="3">Belongs to the LysR transcriptional regulatory family.</text>
</comment>
<reference key="1">
    <citation type="journal article" date="1993" name="J. Bacteriol.">
        <title>Phenotype conversion in Pseudomonas solanacearum due to spontaneous inactivation of PhcA, a putative LysR transcriptional regulator.</title>
        <authorList>
            <person name="Brumbley S.M."/>
            <person name="Carney B.F."/>
            <person name="Denny T.P."/>
        </authorList>
    </citation>
    <scope>NUCLEOTIDE SEQUENCE [GENOMIC DNA]</scope>
    <source>
        <strain>AW1</strain>
    </source>
</reference>
<reference key="2">
    <citation type="journal article" date="2000" name="J. Bacteriol.">
        <title>Novel insertion sequence elements associated with genetic heterogeneity and phenotype conversion in Ralstonia solanacearum.</title>
        <authorList>
            <person name="Jeong E.-L."/>
            <person name="Timmis J.N."/>
        </authorList>
    </citation>
    <scope>NUCLEOTIDE SEQUENCE [GENOMIC DNA]</scope>
    <source>
        <strain>ACH0158 / Biovar 2</strain>
    </source>
</reference>
<reference key="3">
    <citation type="submission" date="2000-02" db="EMBL/GenBank/DDBJ databases">
        <title>Plant-induced phase reversion from non-pathogenic to pathogenic form of Ralstonia solanacearum.</title>
        <authorList>
            <person name="Thoquet P."/>
            <person name="Trigalet-Demery D."/>
            <person name="Trigalet A."/>
        </authorList>
    </citation>
    <scope>NUCLEOTIDE SEQUENCE [GENOMIC DNA]</scope>
</reference>
<reference key="4">
    <citation type="journal article" date="2002" name="Nature">
        <title>Genome sequence of the plant pathogen Ralstonia solanacearum.</title>
        <authorList>
            <person name="Salanoubat M."/>
            <person name="Genin S."/>
            <person name="Artiguenave F."/>
            <person name="Gouzy J."/>
            <person name="Mangenot S."/>
            <person name="Arlat M."/>
            <person name="Billault A."/>
            <person name="Brottier P."/>
            <person name="Camus J.-C."/>
            <person name="Cattolico L."/>
            <person name="Chandler M."/>
            <person name="Choisne N."/>
            <person name="Claudel-Renard C."/>
            <person name="Cunnac S."/>
            <person name="Demange N."/>
            <person name="Gaspin C."/>
            <person name="Lavie M."/>
            <person name="Moisan A."/>
            <person name="Robert C."/>
            <person name="Saurin W."/>
            <person name="Schiex T."/>
            <person name="Siguier P."/>
            <person name="Thebault P."/>
            <person name="Whalen M."/>
            <person name="Wincker P."/>
            <person name="Levy M."/>
            <person name="Weissenbach J."/>
            <person name="Boucher C.A."/>
        </authorList>
    </citation>
    <scope>NUCLEOTIDE SEQUENCE [LARGE SCALE GENOMIC DNA]</scope>
    <source>
        <strain>ATCC BAA-1114 / GMI1000</strain>
    </source>
</reference>